<feature type="chain" id="PRO_0000068770" description="Isocitrate lyase">
    <location>
        <begin position="1"/>
        <end position="15" status="greater than"/>
    </location>
</feature>
<feature type="non-terminal residue">
    <location>
        <position position="15"/>
    </location>
</feature>
<protein>
    <recommendedName>
        <fullName evidence="2">Isocitrate lyase</fullName>
        <shortName evidence="2">ICL</shortName>
        <ecNumber evidence="1">4.1.3.1</ecNumber>
    </recommendedName>
    <alternativeName>
        <fullName evidence="2">Isocitrase</fullName>
    </alternativeName>
    <alternativeName>
        <fullName evidence="2">Isocitratase</fullName>
    </alternativeName>
</protein>
<comment type="function">
    <text evidence="1">Involved in the metabolic adaptation in response to environmental changes. Catalyzes the reversible formation of succinate and glyoxylate from isocitrate, a key step of the glyoxylate cycle, which operates as an anaplerotic route for replenishing the tricarboxylic acid cycle during growth on fatty acid substrates.</text>
</comment>
<comment type="catalytic activity">
    <reaction evidence="1">
        <text>D-threo-isocitrate = glyoxylate + succinate</text>
        <dbReference type="Rhea" id="RHEA:13245"/>
        <dbReference type="ChEBI" id="CHEBI:15562"/>
        <dbReference type="ChEBI" id="CHEBI:30031"/>
        <dbReference type="ChEBI" id="CHEBI:36655"/>
        <dbReference type="EC" id="4.1.3.1"/>
    </reaction>
</comment>
<comment type="cofactor">
    <cofactor evidence="1">
        <name>Mg(2+)</name>
        <dbReference type="ChEBI" id="CHEBI:18420"/>
    </cofactor>
    <text evidence="1">Divalent metal cations. Mn(2+), Fe(2+) or Co(2+) can be used.</text>
</comment>
<comment type="activity regulation">
    <text evidence="1">Inhibited by hydroxymalonate, oxalate and itaconate.</text>
</comment>
<comment type="biophysicochemical properties">
    <kinetics>
        <KM evidence="1">40 uM for threo-D-isocitrate</KM>
    </kinetics>
    <phDependence>
        <text evidence="1">Optimum pH is 7.5.</text>
    </phDependence>
</comment>
<comment type="pathway">
    <text evidence="4">Carbohydrate metabolism; glyoxylate cycle; (S)-malate from isocitrate: step 1/2.</text>
</comment>
<comment type="subunit">
    <text evidence="1">Homotetramer.</text>
</comment>
<comment type="similarity">
    <text evidence="3">Belongs to the isocitrate lyase/PEP mutase superfamily. Isocitrate lyase family.</text>
</comment>
<organism>
    <name type="scientific">Acinetobacter calcoaceticus</name>
    <dbReference type="NCBI Taxonomy" id="471"/>
    <lineage>
        <taxon>Bacteria</taxon>
        <taxon>Pseudomonadati</taxon>
        <taxon>Pseudomonadota</taxon>
        <taxon>Gammaproteobacteria</taxon>
        <taxon>Moraxellales</taxon>
        <taxon>Moraxellaceae</taxon>
        <taxon>Acinetobacter</taxon>
        <taxon>Acinetobacter calcoaceticus/baumannii complex</taxon>
    </lineage>
</organism>
<dbReference type="EC" id="4.1.3.1" evidence="1"/>
<dbReference type="PIR" id="A41338">
    <property type="entry name" value="A41338"/>
</dbReference>
<dbReference type="SABIO-RK" id="P28467"/>
<dbReference type="UniPathway" id="UPA00703">
    <property type="reaction ID" value="UER00719"/>
</dbReference>
<dbReference type="GO" id="GO:0004451">
    <property type="term" value="F:isocitrate lyase activity"/>
    <property type="evidence" value="ECO:0007669"/>
    <property type="project" value="UniProtKB-EC"/>
</dbReference>
<dbReference type="GO" id="GO:0006097">
    <property type="term" value="P:glyoxylate cycle"/>
    <property type="evidence" value="ECO:0007669"/>
    <property type="project" value="UniProtKB-UniPathway"/>
</dbReference>
<dbReference type="GO" id="GO:0006099">
    <property type="term" value="P:tricarboxylic acid cycle"/>
    <property type="evidence" value="ECO:0007669"/>
    <property type="project" value="UniProtKB-KW"/>
</dbReference>
<proteinExistence type="evidence at protein level"/>
<gene>
    <name type="primary">aceA</name>
</gene>
<evidence type="ECO:0000269" key="1">
    <source>
    </source>
</evidence>
<evidence type="ECO:0000303" key="2">
    <source>
    </source>
</evidence>
<evidence type="ECO:0000305" key="3"/>
<evidence type="ECO:0000305" key="4">
    <source>
    </source>
</evidence>
<name>ACEA_ACICA</name>
<sequence length="15" mass="1710">MTYQTAIDAVRELKA</sequence>
<accession>P28467</accession>
<reference key="1">
    <citation type="journal article" date="1991" name="J. Bacteriol.">
        <title>Purification and characterization of Acinetobacter calcoaceticus isocitrate lyase.</title>
        <authorList>
            <person name="Hoyt J.C."/>
            <person name="Johnson K.E."/>
            <person name="Reeves H.C."/>
        </authorList>
    </citation>
    <scope>PROTEIN SEQUENCE</scope>
    <scope>FUNCTION</scope>
    <scope>CATALYTIC ACTIVITY</scope>
    <scope>BIOPHYSICOCHEMICAL PROPERTIES</scope>
    <scope>ACTIVITY REGULATION</scope>
    <scope>COFACTOR</scope>
    <scope>SUBUNIT</scope>
    <source>
        <strain>B4</strain>
    </source>
</reference>
<keyword id="KW-0170">Cobalt</keyword>
<keyword id="KW-0903">Direct protein sequencing</keyword>
<keyword id="KW-0329">Glyoxylate bypass</keyword>
<keyword id="KW-0408">Iron</keyword>
<keyword id="KW-0456">Lyase</keyword>
<keyword id="KW-0460">Magnesium</keyword>
<keyword id="KW-0464">Manganese</keyword>
<keyword id="KW-0816">Tricarboxylic acid cycle</keyword>